<accession>Q1DR42</accession>
<accession>I9XK78</accession>
<feature type="chain" id="PRO_0000324862" description="Fe-S cluster assembly protein DRE2">
    <location>
        <begin position="1"/>
        <end position="321"/>
    </location>
</feature>
<feature type="region of interest" description="N-terminal SAM-like domain" evidence="1">
    <location>
        <begin position="1"/>
        <end position="131"/>
    </location>
</feature>
<feature type="region of interest" description="Linker" evidence="1">
    <location>
        <begin position="132"/>
        <end position="213"/>
    </location>
</feature>
<feature type="region of interest" description="Fe-S binding site A" evidence="1">
    <location>
        <begin position="223"/>
        <end position="239"/>
    </location>
</feature>
<feature type="region of interest" description="Fe-S binding site B" evidence="1">
    <location>
        <begin position="284"/>
        <end position="298"/>
    </location>
</feature>
<feature type="short sequence motif" description="Cx2C motif 1" evidence="1">
    <location>
        <begin position="284"/>
        <end position="287"/>
    </location>
</feature>
<feature type="short sequence motif" description="Cx2C motif 2" evidence="1">
    <location>
        <begin position="295"/>
        <end position="298"/>
    </location>
</feature>
<feature type="binding site" evidence="1">
    <location>
        <position position="223"/>
    </location>
    <ligand>
        <name>[2Fe-2S] cluster</name>
        <dbReference type="ChEBI" id="CHEBI:190135"/>
    </ligand>
</feature>
<feature type="binding site" evidence="1">
    <location>
        <position position="234"/>
    </location>
    <ligand>
        <name>[2Fe-2S] cluster</name>
        <dbReference type="ChEBI" id="CHEBI:190135"/>
    </ligand>
</feature>
<feature type="binding site" evidence="1">
    <location>
        <position position="237"/>
    </location>
    <ligand>
        <name>[2Fe-2S] cluster</name>
        <dbReference type="ChEBI" id="CHEBI:190135"/>
    </ligand>
</feature>
<feature type="binding site" evidence="1">
    <location>
        <position position="239"/>
    </location>
    <ligand>
        <name>[2Fe-2S] cluster</name>
        <dbReference type="ChEBI" id="CHEBI:190135"/>
    </ligand>
</feature>
<feature type="binding site" evidence="1">
    <location>
        <position position="284"/>
    </location>
    <ligand>
        <name>[4Fe-4S] cluster</name>
        <dbReference type="ChEBI" id="CHEBI:49883"/>
    </ligand>
</feature>
<feature type="binding site" evidence="1">
    <location>
        <position position="287"/>
    </location>
    <ligand>
        <name>[4Fe-4S] cluster</name>
        <dbReference type="ChEBI" id="CHEBI:49883"/>
    </ligand>
</feature>
<feature type="binding site" evidence="1">
    <location>
        <position position="295"/>
    </location>
    <ligand>
        <name>[4Fe-4S] cluster</name>
        <dbReference type="ChEBI" id="CHEBI:49883"/>
    </ligand>
</feature>
<feature type="binding site" evidence="1">
    <location>
        <position position="298"/>
    </location>
    <ligand>
        <name>[4Fe-4S] cluster</name>
        <dbReference type="ChEBI" id="CHEBI:49883"/>
    </ligand>
</feature>
<evidence type="ECO:0000255" key="1">
    <source>
        <dbReference type="HAMAP-Rule" id="MF_03115"/>
    </source>
</evidence>
<protein>
    <recommendedName>
        <fullName evidence="1">Fe-S cluster assembly protein DRE2</fullName>
    </recommendedName>
    <alternativeName>
        <fullName evidence="1">Anamorsin homolog</fullName>
    </alternativeName>
</protein>
<organism>
    <name type="scientific">Coccidioides immitis (strain RS)</name>
    <name type="common">Valley fever fungus</name>
    <dbReference type="NCBI Taxonomy" id="246410"/>
    <lineage>
        <taxon>Eukaryota</taxon>
        <taxon>Fungi</taxon>
        <taxon>Dikarya</taxon>
        <taxon>Ascomycota</taxon>
        <taxon>Pezizomycotina</taxon>
        <taxon>Eurotiomycetes</taxon>
        <taxon>Eurotiomycetidae</taxon>
        <taxon>Onygenales</taxon>
        <taxon>Onygenaceae</taxon>
        <taxon>Coccidioides</taxon>
    </lineage>
</organism>
<dbReference type="EMBL" id="GG704912">
    <property type="protein sequence ID" value="EAS31742.3"/>
    <property type="molecule type" value="Genomic_DNA"/>
</dbReference>
<dbReference type="RefSeq" id="XP_001243325.1">
    <property type="nucleotide sequence ID" value="XM_001243324.2"/>
</dbReference>
<dbReference type="STRING" id="246410.Q1DR42"/>
<dbReference type="GeneID" id="4562280"/>
<dbReference type="KEGG" id="cim:CIMG_07221"/>
<dbReference type="VEuPathDB" id="FungiDB:CIMG_07221"/>
<dbReference type="InParanoid" id="Q1DR42"/>
<dbReference type="OMA" id="DFVMPVT"/>
<dbReference type="OrthoDB" id="311633at2759"/>
<dbReference type="Proteomes" id="UP000001261">
    <property type="component" value="Unassembled WGS sequence"/>
</dbReference>
<dbReference type="GO" id="GO:0005758">
    <property type="term" value="C:mitochondrial intermembrane space"/>
    <property type="evidence" value="ECO:0007669"/>
    <property type="project" value="UniProtKB-SubCell"/>
</dbReference>
<dbReference type="GO" id="GO:0051537">
    <property type="term" value="F:2 iron, 2 sulfur cluster binding"/>
    <property type="evidence" value="ECO:0007669"/>
    <property type="project" value="UniProtKB-UniRule"/>
</dbReference>
<dbReference type="GO" id="GO:0051539">
    <property type="term" value="F:4 iron, 4 sulfur cluster binding"/>
    <property type="evidence" value="ECO:0007669"/>
    <property type="project" value="UniProtKB-KW"/>
</dbReference>
<dbReference type="GO" id="GO:0009055">
    <property type="term" value="F:electron transfer activity"/>
    <property type="evidence" value="ECO:0007669"/>
    <property type="project" value="UniProtKB-UniRule"/>
</dbReference>
<dbReference type="GO" id="GO:0046872">
    <property type="term" value="F:metal ion binding"/>
    <property type="evidence" value="ECO:0007669"/>
    <property type="project" value="UniProtKB-KW"/>
</dbReference>
<dbReference type="GO" id="GO:0016226">
    <property type="term" value="P:iron-sulfur cluster assembly"/>
    <property type="evidence" value="ECO:0007669"/>
    <property type="project" value="UniProtKB-UniRule"/>
</dbReference>
<dbReference type="Gene3D" id="3.40.50.11000">
    <property type="entry name" value="Fe-S cluster assembly protein Dre2, N-terminal domain"/>
    <property type="match status" value="1"/>
</dbReference>
<dbReference type="HAMAP" id="MF_03115">
    <property type="entry name" value="Anamorsin"/>
    <property type="match status" value="1"/>
</dbReference>
<dbReference type="InterPro" id="IPR007785">
    <property type="entry name" value="Anamorsin"/>
</dbReference>
<dbReference type="InterPro" id="IPR046408">
    <property type="entry name" value="CIAPIN1"/>
</dbReference>
<dbReference type="InterPro" id="IPR031838">
    <property type="entry name" value="Dre2_N"/>
</dbReference>
<dbReference type="PANTHER" id="PTHR13273">
    <property type="entry name" value="ANAMORSIN"/>
    <property type="match status" value="1"/>
</dbReference>
<dbReference type="PANTHER" id="PTHR13273:SF14">
    <property type="entry name" value="ANAMORSIN"/>
    <property type="match status" value="1"/>
</dbReference>
<dbReference type="Pfam" id="PF05093">
    <property type="entry name" value="CIAPIN1"/>
    <property type="match status" value="1"/>
</dbReference>
<dbReference type="Pfam" id="PF16803">
    <property type="entry name" value="DRE2_N"/>
    <property type="match status" value="1"/>
</dbReference>
<sequence length="321" mass="34448">MERMLLLSPPSLAARPERLNTILSSHSRYATDLQMLDRVAAGLVSLPQSTYDIVMLLTDVDGLGTGSTSAMGRGVIQSVVRALRPGGKFKRENGTFTSTECPDNTELMLAGLVFDDTGGLLKPDFGPENIVPLKLGKRKPVHSVSSNGTGTSGPHVNMQLSTGSMLKGQTTTIKGVGFVDFTDDPSLSEADIYSGQTDDELIDEETLLDGEDMGRPIIQPPECRPKAGKRRRACKDCTCGLAERLREEDKAARAKADATLETMKLAPKELAEVDFTVQGKLGSCGNCALGDAFRCDGCPYIGLPPFKPGEEVRLLSNDVQL</sequence>
<gene>
    <name evidence="1" type="primary">DRE2</name>
    <name type="ORF">CIMG_07221</name>
</gene>
<proteinExistence type="inferred from homology"/>
<name>DRE2_COCIM</name>
<keyword id="KW-0001">2Fe-2S</keyword>
<keyword id="KW-0004">4Fe-4S</keyword>
<keyword id="KW-0963">Cytoplasm</keyword>
<keyword id="KW-0408">Iron</keyword>
<keyword id="KW-0411">Iron-sulfur</keyword>
<keyword id="KW-0479">Metal-binding</keyword>
<keyword id="KW-0496">Mitochondrion</keyword>
<keyword id="KW-1185">Reference proteome</keyword>
<comment type="function">
    <text evidence="1">Component of the cytosolic iron-sulfur (Fe-S) protein assembly (CIA) machinery required for the maturation of extramitochondrial Fe-S proteins. Part of an electron transfer chain functioning in an early step of cytosolic Fe-S biogenesis, facilitating the de novo assembly of a [4Fe-4S] cluster on the scaffold complex CFD1-NBP35. Electrons are transferred to DRE2 from NADPH via the FAD- and FMN-containing protein TAH18. TAH18-DRE2 are also required for the assembly of the diferric tyrosyl radical cofactor of ribonucleotide reductase (RNR), probably by providing electrons for reduction during radical cofactor maturation in the catalytic small subunit RNR2.</text>
</comment>
<comment type="cofactor">
    <cofactor evidence="1">
        <name>[2Fe-2S] cluster</name>
        <dbReference type="ChEBI" id="CHEBI:190135"/>
    </cofactor>
</comment>
<comment type="cofactor">
    <cofactor evidence="1">
        <name>[4Fe-4S] cluster</name>
        <dbReference type="ChEBI" id="CHEBI:49883"/>
    </cofactor>
</comment>
<comment type="subunit">
    <text evidence="1">Monomer. Interacts with TAH18. Interacts with MIA40.</text>
</comment>
<comment type="subcellular location">
    <subcellularLocation>
        <location evidence="1">Cytoplasm</location>
    </subcellularLocation>
    <subcellularLocation>
        <location evidence="1">Mitochondrion intermembrane space</location>
    </subcellularLocation>
</comment>
<comment type="domain">
    <text evidence="1">The C-terminal domain binds 2 Fe-S clusters but is otherwise mostly in an intrinsically disordered conformation.</text>
</comment>
<comment type="domain">
    <text evidence="1">The N-terminal domain has structural similarity with S-adenosyl-L-methionine-dependent methyltransferases, but does not bind S-adenosyl-L-methionine. It is required for correct assembly of the 2 Fe-S clusters.</text>
</comment>
<comment type="domain">
    <text evidence="1">The twin Cx2C motifs are involved in the recognition by the mitochondrial MIA40-ERV1 disulfide relay system. The formation of 2 disulfide bonds in the Cx2C motifs through dithiol/disulfide exchange reactions effectively traps the protein in the mitochondrial intermembrane space.</text>
</comment>
<comment type="similarity">
    <text evidence="1">Belongs to the anamorsin family.</text>
</comment>
<reference key="1">
    <citation type="journal article" date="2009" name="Genome Res.">
        <title>Comparative genomic analyses of the human fungal pathogens Coccidioides and their relatives.</title>
        <authorList>
            <person name="Sharpton T.J."/>
            <person name="Stajich J.E."/>
            <person name="Rounsley S.D."/>
            <person name="Gardner M.J."/>
            <person name="Wortman J.R."/>
            <person name="Jordar V.S."/>
            <person name="Maiti R."/>
            <person name="Kodira C.D."/>
            <person name="Neafsey D.E."/>
            <person name="Zeng Q."/>
            <person name="Hung C.-Y."/>
            <person name="McMahan C."/>
            <person name="Muszewska A."/>
            <person name="Grynberg M."/>
            <person name="Mandel M.A."/>
            <person name="Kellner E.M."/>
            <person name="Barker B.M."/>
            <person name="Galgiani J.N."/>
            <person name="Orbach M.J."/>
            <person name="Kirkland T.N."/>
            <person name="Cole G.T."/>
            <person name="Henn M.R."/>
            <person name="Birren B.W."/>
            <person name="Taylor J.W."/>
        </authorList>
    </citation>
    <scope>NUCLEOTIDE SEQUENCE [LARGE SCALE GENOMIC DNA]</scope>
    <source>
        <strain>RS</strain>
    </source>
</reference>
<reference key="2">
    <citation type="journal article" date="2010" name="Genome Res.">
        <title>Population genomic sequencing of Coccidioides fungi reveals recent hybridization and transposon control.</title>
        <authorList>
            <person name="Neafsey D.E."/>
            <person name="Barker B.M."/>
            <person name="Sharpton T.J."/>
            <person name="Stajich J.E."/>
            <person name="Park D.J."/>
            <person name="Whiston E."/>
            <person name="Hung C.-Y."/>
            <person name="McMahan C."/>
            <person name="White J."/>
            <person name="Sykes S."/>
            <person name="Heiman D."/>
            <person name="Young S."/>
            <person name="Zeng Q."/>
            <person name="Abouelleil A."/>
            <person name="Aftuck L."/>
            <person name="Bessette D."/>
            <person name="Brown A."/>
            <person name="FitzGerald M."/>
            <person name="Lui A."/>
            <person name="Macdonald J.P."/>
            <person name="Priest M."/>
            <person name="Orbach M.J."/>
            <person name="Galgiani J.N."/>
            <person name="Kirkland T.N."/>
            <person name="Cole G.T."/>
            <person name="Birren B.W."/>
            <person name="Henn M.R."/>
            <person name="Taylor J.W."/>
            <person name="Rounsley S.D."/>
        </authorList>
    </citation>
    <scope>GENOME REANNOTATION</scope>
    <source>
        <strain>RS</strain>
    </source>
</reference>